<comment type="function">
    <text evidence="1 3">Binds medium- and long-chain acyl-CoA esters with very high affinity and may function as an intracellular carrier of acyl-CoA esters (By similarity). May be involved in energy metabolism in a manner that depends on the substrate used for energy production. Dbi and its metabolites are involved in the regulation of multiple biological processes.</text>
</comment>
<comment type="tissue specificity">
    <text evidence="3">Expressed in larval and pupal brains. In adults, expressed in cardia, part of the Malpighian tubules, fat body, and gametes of both sexes.</text>
</comment>
<comment type="developmental stage">
    <text evidence="3">Expressed from the larval stage onwards throughout the adult stage.</text>
</comment>
<comment type="similarity">
    <text evidence="5">Belongs to the ACBP family.</text>
</comment>
<evidence type="ECO:0000250" key="1"/>
<evidence type="ECO:0000255" key="2">
    <source>
        <dbReference type="PROSITE-ProRule" id="PRU00573"/>
    </source>
</evidence>
<evidence type="ECO:0000269" key="3">
    <source>
    </source>
</evidence>
<evidence type="ECO:0000303" key="4">
    <source>
    </source>
</evidence>
<evidence type="ECO:0000305" key="5"/>
<evidence type="ECO:0000312" key="6">
    <source>
        <dbReference type="FlyBase" id="FBgn0010387"/>
    </source>
</evidence>
<keyword id="KW-0446">Lipid-binding</keyword>
<keyword id="KW-1185">Reference proteome</keyword>
<keyword id="KW-0813">Transport</keyword>
<protein>
    <recommendedName>
        <fullName>Acyl-CoA-binding protein homolog</fullName>
        <shortName>ACBP</shortName>
    </recommendedName>
    <alternativeName>
        <fullName>Diazepam-binding inhibitor homolog</fullName>
        <shortName>DBI</shortName>
    </alternativeName>
</protein>
<gene>
    <name evidence="6" type="primary">Acbp2</name>
    <name evidence="4" type="synonym">Dbi</name>
    <name evidence="6" type="ORF">CG8627</name>
</gene>
<feature type="chain" id="PRO_0000214010" description="Acyl-CoA-binding protein homolog">
    <location>
        <begin position="1"/>
        <end position="86"/>
    </location>
</feature>
<feature type="domain" description="ACB" evidence="2">
    <location>
        <begin position="2"/>
        <end position="86"/>
    </location>
</feature>
<feature type="binding site" evidence="1">
    <location>
        <position position="14"/>
    </location>
    <ligand>
        <name>an acyl-CoA</name>
        <dbReference type="ChEBI" id="CHEBI:58342"/>
    </ligand>
</feature>
<feature type="binding site" evidence="1">
    <location>
        <begin position="29"/>
        <end position="33"/>
    </location>
    <ligand>
        <name>an acyl-CoA</name>
        <dbReference type="ChEBI" id="CHEBI:58342"/>
    </ligand>
</feature>
<feature type="binding site" evidence="1">
    <location>
        <position position="51"/>
    </location>
    <ligand>
        <name>an acyl-CoA</name>
        <dbReference type="ChEBI" id="CHEBI:58342"/>
    </ligand>
</feature>
<feature type="binding site" evidence="1">
    <location>
        <position position="55"/>
    </location>
    <ligand>
        <name>an acyl-CoA</name>
        <dbReference type="ChEBI" id="CHEBI:58342"/>
    </ligand>
</feature>
<feature type="binding site" evidence="1">
    <location>
        <position position="74"/>
    </location>
    <ligand>
        <name>an acyl-CoA</name>
        <dbReference type="ChEBI" id="CHEBI:58342"/>
    </ligand>
</feature>
<feature type="sequence conflict" description="In Ref. 2; CAA53268." evidence="5" ref="2">
    <original>K</original>
    <variation>S</variation>
    <location>
        <position position="55"/>
    </location>
</feature>
<accession>P42281</accession>
<accession>A4V1K8</accession>
<accession>Q9VS23</accession>
<dbReference type="EMBL" id="U04822">
    <property type="protein sequence ID" value="AAA21649.1"/>
    <property type="molecule type" value="Genomic_DNA"/>
</dbReference>
<dbReference type="EMBL" id="U04823">
    <property type="protein sequence ID" value="AAA21650.1"/>
    <property type="molecule type" value="mRNA"/>
</dbReference>
<dbReference type="EMBL" id="X75596">
    <property type="protein sequence ID" value="CAA53268.1"/>
    <property type="molecule type" value="mRNA"/>
</dbReference>
<dbReference type="EMBL" id="AE014296">
    <property type="protein sequence ID" value="AAF50607.1"/>
    <property type="molecule type" value="Genomic_DNA"/>
</dbReference>
<dbReference type="EMBL" id="AE014296">
    <property type="protein sequence ID" value="AAN12074.1"/>
    <property type="molecule type" value="Genomic_DNA"/>
</dbReference>
<dbReference type="EMBL" id="AY070704">
    <property type="protein sequence ID" value="AAL48175.1"/>
    <property type="molecule type" value="mRNA"/>
</dbReference>
<dbReference type="PIR" id="A56041">
    <property type="entry name" value="A56041"/>
</dbReference>
<dbReference type="PIR" id="S38574">
    <property type="entry name" value="S38574"/>
</dbReference>
<dbReference type="RefSeq" id="NP_523952.2">
    <property type="nucleotide sequence ID" value="NM_079228.3"/>
</dbReference>
<dbReference type="RefSeq" id="NP_729218.1">
    <property type="nucleotide sequence ID" value="NM_168192.3"/>
</dbReference>
<dbReference type="SMR" id="P42281"/>
<dbReference type="FunCoup" id="P42281">
    <property type="interactions" value="249"/>
</dbReference>
<dbReference type="IntAct" id="P42281">
    <property type="interactions" value="1"/>
</dbReference>
<dbReference type="STRING" id="7227.FBpp0076624"/>
<dbReference type="PaxDb" id="7227-FBpp0076624"/>
<dbReference type="DNASU" id="38784"/>
<dbReference type="EnsemblMetazoa" id="FBtr0076915">
    <property type="protein sequence ID" value="FBpp0076624"/>
    <property type="gene ID" value="FBgn0010387"/>
</dbReference>
<dbReference type="EnsemblMetazoa" id="FBtr0076916">
    <property type="protein sequence ID" value="FBpp0076625"/>
    <property type="gene ID" value="FBgn0010387"/>
</dbReference>
<dbReference type="GeneID" id="38784"/>
<dbReference type="KEGG" id="dme:Dmel_CG8627"/>
<dbReference type="AGR" id="FB:FBgn0010387"/>
<dbReference type="CTD" id="38784"/>
<dbReference type="FlyBase" id="FBgn0010387">
    <property type="gene designation" value="Acbp2"/>
</dbReference>
<dbReference type="VEuPathDB" id="VectorBase:FBgn0010387"/>
<dbReference type="eggNOG" id="KOG0817">
    <property type="taxonomic scope" value="Eukaryota"/>
</dbReference>
<dbReference type="GeneTree" id="ENSGT00940000173845"/>
<dbReference type="HOGENOM" id="CLU_118853_4_1_1"/>
<dbReference type="InParanoid" id="P42281"/>
<dbReference type="OMA" id="YFYKYYK"/>
<dbReference type="OrthoDB" id="346910at2759"/>
<dbReference type="PhylomeDB" id="P42281"/>
<dbReference type="BioGRID-ORCS" id="38784">
    <property type="hits" value="0 hits in 3 CRISPR screens"/>
</dbReference>
<dbReference type="ChiTaRS" id="Dbi">
    <property type="organism name" value="fly"/>
</dbReference>
<dbReference type="GenomeRNAi" id="38784"/>
<dbReference type="PRO" id="PR:P42281"/>
<dbReference type="Proteomes" id="UP000000803">
    <property type="component" value="Chromosome 3L"/>
</dbReference>
<dbReference type="Bgee" id="FBgn0010387">
    <property type="expression patterns" value="Expressed in crop (Drosophila) and 156 other cell types or tissues"/>
</dbReference>
<dbReference type="ExpressionAtlas" id="P42281">
    <property type="expression patterns" value="baseline and differential"/>
</dbReference>
<dbReference type="GO" id="GO:0000062">
    <property type="term" value="F:fatty-acyl-CoA binding"/>
    <property type="evidence" value="ECO:0000250"/>
    <property type="project" value="FlyBase"/>
</dbReference>
<dbReference type="GO" id="GO:0006631">
    <property type="term" value="P:fatty acid metabolic process"/>
    <property type="evidence" value="ECO:0000318"/>
    <property type="project" value="GO_Central"/>
</dbReference>
<dbReference type="GO" id="GO:0042049">
    <property type="term" value="P:intracellular acyl-CoA homeostasis"/>
    <property type="evidence" value="ECO:0000250"/>
    <property type="project" value="FlyBase"/>
</dbReference>
<dbReference type="CDD" id="cd00435">
    <property type="entry name" value="ACBP"/>
    <property type="match status" value="1"/>
</dbReference>
<dbReference type="FunFam" id="1.20.80.10:FF:000010">
    <property type="entry name" value="Acyl-CoA-binding domain-containing protein 5"/>
    <property type="match status" value="1"/>
</dbReference>
<dbReference type="Gene3D" id="1.20.80.10">
    <property type="match status" value="1"/>
</dbReference>
<dbReference type="InterPro" id="IPR022408">
    <property type="entry name" value="Acyl-CoA-binding_prot_CS"/>
</dbReference>
<dbReference type="InterPro" id="IPR000582">
    <property type="entry name" value="Acyl-CoA-binding_protein"/>
</dbReference>
<dbReference type="InterPro" id="IPR035984">
    <property type="entry name" value="Acyl-CoA-binding_sf"/>
</dbReference>
<dbReference type="InterPro" id="IPR014352">
    <property type="entry name" value="FERM/acyl-CoA-bd_prot_sf"/>
</dbReference>
<dbReference type="PANTHER" id="PTHR23310:SF137">
    <property type="entry name" value="ACYL-COA BINDING PROTEIN 3, ISOFORM A-RELATED"/>
    <property type="match status" value="1"/>
</dbReference>
<dbReference type="PANTHER" id="PTHR23310">
    <property type="entry name" value="ACYL-COA-BINDING PROTEIN, ACBP"/>
    <property type="match status" value="1"/>
</dbReference>
<dbReference type="Pfam" id="PF00887">
    <property type="entry name" value="ACBP"/>
    <property type="match status" value="1"/>
</dbReference>
<dbReference type="PRINTS" id="PR00689">
    <property type="entry name" value="ACOABINDINGP"/>
</dbReference>
<dbReference type="SUPFAM" id="SSF47027">
    <property type="entry name" value="Acyl-CoA binding protein"/>
    <property type="match status" value="1"/>
</dbReference>
<dbReference type="PROSITE" id="PS00880">
    <property type="entry name" value="ACB_1"/>
    <property type="match status" value="1"/>
</dbReference>
<dbReference type="PROSITE" id="PS51228">
    <property type="entry name" value="ACB_2"/>
    <property type="match status" value="1"/>
</dbReference>
<reference key="1">
    <citation type="journal article" date="1994" name="Mol. Cell. Biol.">
        <title>Tissue-specific expression of the diazepam-binding inhibitor in Drosophila melanogaster: cloning, structure, and localization of the gene.</title>
        <authorList>
            <person name="Kolmer M."/>
            <person name="Roos C."/>
            <person name="Tirronen M."/>
            <person name="Myoehaenen S."/>
            <person name="Alho H."/>
        </authorList>
    </citation>
    <scope>NUCLEOTIDE SEQUENCE [GENOMIC DNA / MRNA]</scope>
    <scope>FUNCTION</scope>
    <scope>TISSUE SPECIFICITY</scope>
    <scope>DEVELOPMENTAL STAGE</scope>
    <source>
        <strain>Oregon-R</strain>
    </source>
</reference>
<reference key="2">
    <citation type="submission" date="1993-11" db="EMBL/GenBank/DDBJ databases">
        <title>Diazepam binding inhibitor/endozepine/acyl-CoA-binding homologue from Drosophila melanogaster.</title>
        <authorList>
            <person name="Lagueux M."/>
            <person name="Bulet P."/>
            <person name="Hetru C."/>
        </authorList>
    </citation>
    <scope>NUCLEOTIDE SEQUENCE [MRNA]</scope>
    <source>
        <strain>Oregon-R</strain>
    </source>
</reference>
<reference key="3">
    <citation type="journal article" date="2000" name="Science">
        <title>The genome sequence of Drosophila melanogaster.</title>
        <authorList>
            <person name="Adams M.D."/>
            <person name="Celniker S.E."/>
            <person name="Holt R.A."/>
            <person name="Evans C.A."/>
            <person name="Gocayne J.D."/>
            <person name="Amanatides P.G."/>
            <person name="Scherer S.E."/>
            <person name="Li P.W."/>
            <person name="Hoskins R.A."/>
            <person name="Galle R.F."/>
            <person name="George R.A."/>
            <person name="Lewis S.E."/>
            <person name="Richards S."/>
            <person name="Ashburner M."/>
            <person name="Henderson S.N."/>
            <person name="Sutton G.G."/>
            <person name="Wortman J.R."/>
            <person name="Yandell M.D."/>
            <person name="Zhang Q."/>
            <person name="Chen L.X."/>
            <person name="Brandon R.C."/>
            <person name="Rogers Y.-H.C."/>
            <person name="Blazej R.G."/>
            <person name="Champe M."/>
            <person name="Pfeiffer B.D."/>
            <person name="Wan K.H."/>
            <person name="Doyle C."/>
            <person name="Baxter E.G."/>
            <person name="Helt G."/>
            <person name="Nelson C.R."/>
            <person name="Miklos G.L.G."/>
            <person name="Abril J.F."/>
            <person name="Agbayani A."/>
            <person name="An H.-J."/>
            <person name="Andrews-Pfannkoch C."/>
            <person name="Baldwin D."/>
            <person name="Ballew R.M."/>
            <person name="Basu A."/>
            <person name="Baxendale J."/>
            <person name="Bayraktaroglu L."/>
            <person name="Beasley E.M."/>
            <person name="Beeson K.Y."/>
            <person name="Benos P.V."/>
            <person name="Berman B.P."/>
            <person name="Bhandari D."/>
            <person name="Bolshakov S."/>
            <person name="Borkova D."/>
            <person name="Botchan M.R."/>
            <person name="Bouck J."/>
            <person name="Brokstein P."/>
            <person name="Brottier P."/>
            <person name="Burtis K.C."/>
            <person name="Busam D.A."/>
            <person name="Butler H."/>
            <person name="Cadieu E."/>
            <person name="Center A."/>
            <person name="Chandra I."/>
            <person name="Cherry J.M."/>
            <person name="Cawley S."/>
            <person name="Dahlke C."/>
            <person name="Davenport L.B."/>
            <person name="Davies P."/>
            <person name="de Pablos B."/>
            <person name="Delcher A."/>
            <person name="Deng Z."/>
            <person name="Mays A.D."/>
            <person name="Dew I."/>
            <person name="Dietz S.M."/>
            <person name="Dodson K."/>
            <person name="Doup L.E."/>
            <person name="Downes M."/>
            <person name="Dugan-Rocha S."/>
            <person name="Dunkov B.C."/>
            <person name="Dunn P."/>
            <person name="Durbin K.J."/>
            <person name="Evangelista C.C."/>
            <person name="Ferraz C."/>
            <person name="Ferriera S."/>
            <person name="Fleischmann W."/>
            <person name="Fosler C."/>
            <person name="Gabrielian A.E."/>
            <person name="Garg N.S."/>
            <person name="Gelbart W.M."/>
            <person name="Glasser K."/>
            <person name="Glodek A."/>
            <person name="Gong F."/>
            <person name="Gorrell J.H."/>
            <person name="Gu Z."/>
            <person name="Guan P."/>
            <person name="Harris M."/>
            <person name="Harris N.L."/>
            <person name="Harvey D.A."/>
            <person name="Heiman T.J."/>
            <person name="Hernandez J.R."/>
            <person name="Houck J."/>
            <person name="Hostin D."/>
            <person name="Houston K.A."/>
            <person name="Howland T.J."/>
            <person name="Wei M.-H."/>
            <person name="Ibegwam C."/>
            <person name="Jalali M."/>
            <person name="Kalush F."/>
            <person name="Karpen G.H."/>
            <person name="Ke Z."/>
            <person name="Kennison J.A."/>
            <person name="Ketchum K.A."/>
            <person name="Kimmel B.E."/>
            <person name="Kodira C.D."/>
            <person name="Kraft C.L."/>
            <person name="Kravitz S."/>
            <person name="Kulp D."/>
            <person name="Lai Z."/>
            <person name="Lasko P."/>
            <person name="Lei Y."/>
            <person name="Levitsky A.A."/>
            <person name="Li J.H."/>
            <person name="Li Z."/>
            <person name="Liang Y."/>
            <person name="Lin X."/>
            <person name="Liu X."/>
            <person name="Mattei B."/>
            <person name="McIntosh T.C."/>
            <person name="McLeod M.P."/>
            <person name="McPherson D."/>
            <person name="Merkulov G."/>
            <person name="Milshina N.V."/>
            <person name="Mobarry C."/>
            <person name="Morris J."/>
            <person name="Moshrefi A."/>
            <person name="Mount S.M."/>
            <person name="Moy M."/>
            <person name="Murphy B."/>
            <person name="Murphy L."/>
            <person name="Muzny D.M."/>
            <person name="Nelson D.L."/>
            <person name="Nelson D.R."/>
            <person name="Nelson K.A."/>
            <person name="Nixon K."/>
            <person name="Nusskern D.R."/>
            <person name="Pacleb J.M."/>
            <person name="Palazzolo M."/>
            <person name="Pittman G.S."/>
            <person name="Pan S."/>
            <person name="Pollard J."/>
            <person name="Puri V."/>
            <person name="Reese M.G."/>
            <person name="Reinert K."/>
            <person name="Remington K."/>
            <person name="Saunders R.D.C."/>
            <person name="Scheeler F."/>
            <person name="Shen H."/>
            <person name="Shue B.C."/>
            <person name="Siden-Kiamos I."/>
            <person name="Simpson M."/>
            <person name="Skupski M.P."/>
            <person name="Smith T.J."/>
            <person name="Spier E."/>
            <person name="Spradling A.C."/>
            <person name="Stapleton M."/>
            <person name="Strong R."/>
            <person name="Sun E."/>
            <person name="Svirskas R."/>
            <person name="Tector C."/>
            <person name="Turner R."/>
            <person name="Venter E."/>
            <person name="Wang A.H."/>
            <person name="Wang X."/>
            <person name="Wang Z.-Y."/>
            <person name="Wassarman D.A."/>
            <person name="Weinstock G.M."/>
            <person name="Weissenbach J."/>
            <person name="Williams S.M."/>
            <person name="Woodage T."/>
            <person name="Worley K.C."/>
            <person name="Wu D."/>
            <person name="Yang S."/>
            <person name="Yao Q.A."/>
            <person name="Ye J."/>
            <person name="Yeh R.-F."/>
            <person name="Zaveri J.S."/>
            <person name="Zhan M."/>
            <person name="Zhang G."/>
            <person name="Zhao Q."/>
            <person name="Zheng L."/>
            <person name="Zheng X.H."/>
            <person name="Zhong F.N."/>
            <person name="Zhong W."/>
            <person name="Zhou X."/>
            <person name="Zhu S.C."/>
            <person name="Zhu X."/>
            <person name="Smith H.O."/>
            <person name="Gibbs R.A."/>
            <person name="Myers E.W."/>
            <person name="Rubin G.M."/>
            <person name="Venter J.C."/>
        </authorList>
    </citation>
    <scope>NUCLEOTIDE SEQUENCE [LARGE SCALE GENOMIC DNA]</scope>
    <source>
        <strain>Berkeley</strain>
    </source>
</reference>
<reference key="4">
    <citation type="journal article" date="2002" name="Genome Biol.">
        <title>Annotation of the Drosophila melanogaster euchromatic genome: a systematic review.</title>
        <authorList>
            <person name="Misra S."/>
            <person name="Crosby M.A."/>
            <person name="Mungall C.J."/>
            <person name="Matthews B.B."/>
            <person name="Campbell K.S."/>
            <person name="Hradecky P."/>
            <person name="Huang Y."/>
            <person name="Kaminker J.S."/>
            <person name="Millburn G.H."/>
            <person name="Prochnik S.E."/>
            <person name="Smith C.D."/>
            <person name="Tupy J.L."/>
            <person name="Whitfield E.J."/>
            <person name="Bayraktaroglu L."/>
            <person name="Berman B.P."/>
            <person name="Bettencourt B.R."/>
            <person name="Celniker S.E."/>
            <person name="de Grey A.D.N.J."/>
            <person name="Drysdale R.A."/>
            <person name="Harris N.L."/>
            <person name="Richter J."/>
            <person name="Russo S."/>
            <person name="Schroeder A.J."/>
            <person name="Shu S.Q."/>
            <person name="Stapleton M."/>
            <person name="Yamada C."/>
            <person name="Ashburner M."/>
            <person name="Gelbart W.M."/>
            <person name="Rubin G.M."/>
            <person name="Lewis S.E."/>
        </authorList>
    </citation>
    <scope>GENOME REANNOTATION</scope>
    <source>
        <strain>Berkeley</strain>
    </source>
</reference>
<reference key="5">
    <citation type="journal article" date="2002" name="Genome Biol.">
        <title>A Drosophila full-length cDNA resource.</title>
        <authorList>
            <person name="Stapleton M."/>
            <person name="Carlson J.W."/>
            <person name="Brokstein P."/>
            <person name="Yu C."/>
            <person name="Champe M."/>
            <person name="George R.A."/>
            <person name="Guarin H."/>
            <person name="Kronmiller B."/>
            <person name="Pacleb J.M."/>
            <person name="Park S."/>
            <person name="Wan K.H."/>
            <person name="Rubin G.M."/>
            <person name="Celniker S.E."/>
        </authorList>
    </citation>
    <scope>NUCLEOTIDE SEQUENCE [LARGE SCALE MRNA]</scope>
    <source>
        <strain>Berkeley</strain>
        <tissue>Head</tissue>
    </source>
</reference>
<proteinExistence type="evidence at transcript level"/>
<sequence>MVSEQFNAAAEKVKSLTKRPSDDEFLQLYALFKQASVGDNDTAKPGLLDLKGKAKWEAWNKQKGKSSEAAQQEYITFVEGLVAKYA</sequence>
<organism>
    <name type="scientific">Drosophila melanogaster</name>
    <name type="common">Fruit fly</name>
    <dbReference type="NCBI Taxonomy" id="7227"/>
    <lineage>
        <taxon>Eukaryota</taxon>
        <taxon>Metazoa</taxon>
        <taxon>Ecdysozoa</taxon>
        <taxon>Arthropoda</taxon>
        <taxon>Hexapoda</taxon>
        <taxon>Insecta</taxon>
        <taxon>Pterygota</taxon>
        <taxon>Neoptera</taxon>
        <taxon>Endopterygota</taxon>
        <taxon>Diptera</taxon>
        <taxon>Brachycera</taxon>
        <taxon>Muscomorpha</taxon>
        <taxon>Ephydroidea</taxon>
        <taxon>Drosophilidae</taxon>
        <taxon>Drosophila</taxon>
        <taxon>Sophophora</taxon>
    </lineage>
</organism>
<name>ACBP_DROME</name>